<protein>
    <recommendedName>
        <fullName evidence="1">UDP-N-acetyl-D-mannosaminuronic acid transferase</fullName>
        <shortName evidence="1">UDP-ManNAcA transferase</shortName>
        <ecNumber evidence="1">2.4.1.180</ecNumber>
    </recommendedName>
</protein>
<feature type="chain" id="PRO_1000062727" description="UDP-N-acetyl-D-mannosaminuronic acid transferase">
    <location>
        <begin position="1"/>
        <end position="246"/>
    </location>
</feature>
<evidence type="ECO:0000255" key="1">
    <source>
        <dbReference type="HAMAP-Rule" id="MF_01001"/>
    </source>
</evidence>
<organism>
    <name type="scientific">Escherichia coli O1:K1 / APEC</name>
    <dbReference type="NCBI Taxonomy" id="405955"/>
    <lineage>
        <taxon>Bacteria</taxon>
        <taxon>Pseudomonadati</taxon>
        <taxon>Pseudomonadota</taxon>
        <taxon>Gammaproteobacteria</taxon>
        <taxon>Enterobacterales</taxon>
        <taxon>Enterobacteriaceae</taxon>
        <taxon>Escherichia</taxon>
    </lineage>
</organism>
<name>WECG_ECOK1</name>
<accession>A1AHW4</accession>
<keyword id="KW-0328">Glycosyltransferase</keyword>
<keyword id="KW-1185">Reference proteome</keyword>
<keyword id="KW-0808">Transferase</keyword>
<comment type="function">
    <text evidence="1">Catalyzes the synthesis of Und-PP-GlcNAc-ManNAcA (Lipid II), the second lipid-linked intermediate involved in enterobacterial common antigen (ECA) synthesis.</text>
</comment>
<comment type="catalytic activity">
    <reaction evidence="1">
        <text>UDP-N-acetyl-alpha-D-mannosaminouronate + N-acetyl-alpha-D-glucosaminyl-di-trans,octa-cis-undecaprenyl diphosphate = beta-D-ManNAcA-(1-&gt;4)-alpha-D-GlcNAc-di-trans,octa-cis-undecaprenyl diphosphate + UDP + H(+)</text>
        <dbReference type="Rhea" id="RHEA:28366"/>
        <dbReference type="ChEBI" id="CHEBI:15378"/>
        <dbReference type="ChEBI" id="CHEBI:58223"/>
        <dbReference type="ChEBI" id="CHEBI:61495"/>
        <dbReference type="ChEBI" id="CHEBI:62959"/>
        <dbReference type="ChEBI" id="CHEBI:70731"/>
        <dbReference type="EC" id="2.4.1.180"/>
    </reaction>
</comment>
<comment type="pathway">
    <text evidence="1">Bacterial outer membrane biogenesis; enterobacterial common antigen biosynthesis.</text>
</comment>
<comment type="similarity">
    <text evidence="1">Belongs to the glycosyltransferase 26 family.</text>
</comment>
<dbReference type="EC" id="2.4.1.180" evidence="1"/>
<dbReference type="EMBL" id="CP000468">
    <property type="protein sequence ID" value="ABJ03254.1"/>
    <property type="molecule type" value="Genomic_DNA"/>
</dbReference>
<dbReference type="RefSeq" id="WP_001064047.1">
    <property type="nucleotide sequence ID" value="NZ_CADILS010000046.1"/>
</dbReference>
<dbReference type="SMR" id="A1AHW4"/>
<dbReference type="CAZy" id="GT26">
    <property type="family name" value="Glycosyltransferase Family 26"/>
</dbReference>
<dbReference type="KEGG" id="ecv:APECO1_2680"/>
<dbReference type="HOGENOM" id="CLU_063203_3_2_6"/>
<dbReference type="UniPathway" id="UPA00566"/>
<dbReference type="Proteomes" id="UP000008216">
    <property type="component" value="Chromosome"/>
</dbReference>
<dbReference type="GO" id="GO:0047241">
    <property type="term" value="F:lipopolysaccharide N-acetylmannosaminouronosyltransferase activity"/>
    <property type="evidence" value="ECO:0007669"/>
    <property type="project" value="UniProtKB-UniRule"/>
</dbReference>
<dbReference type="GO" id="GO:0009246">
    <property type="term" value="P:enterobacterial common antigen biosynthetic process"/>
    <property type="evidence" value="ECO:0007669"/>
    <property type="project" value="UniProtKB-UniRule"/>
</dbReference>
<dbReference type="CDD" id="cd06533">
    <property type="entry name" value="Glyco_transf_WecG_TagA"/>
    <property type="match status" value="1"/>
</dbReference>
<dbReference type="HAMAP" id="MF_01001">
    <property type="entry name" value="WecG_RffM"/>
    <property type="match status" value="1"/>
</dbReference>
<dbReference type="InterPro" id="IPR023085">
    <property type="entry name" value="UDP-ManNAcA_Trfase_WecG"/>
</dbReference>
<dbReference type="InterPro" id="IPR004629">
    <property type="entry name" value="WecG_TagA_CpsF"/>
</dbReference>
<dbReference type="NCBIfam" id="NF002980">
    <property type="entry name" value="PRK03692.1"/>
    <property type="match status" value="1"/>
</dbReference>
<dbReference type="NCBIfam" id="TIGR00696">
    <property type="entry name" value="wecG_tagA_cpsF"/>
    <property type="match status" value="1"/>
</dbReference>
<dbReference type="PANTHER" id="PTHR34136">
    <property type="match status" value="1"/>
</dbReference>
<dbReference type="PANTHER" id="PTHR34136:SF1">
    <property type="entry name" value="UDP-N-ACETYL-D-MANNOSAMINURONIC ACID TRANSFERASE"/>
    <property type="match status" value="1"/>
</dbReference>
<dbReference type="Pfam" id="PF03808">
    <property type="entry name" value="Glyco_tran_WecG"/>
    <property type="match status" value="1"/>
</dbReference>
<sequence length="246" mass="27977">MNNNTTAPTYTLRGLQLIGWRDMQHALDYLFADGQLKQGTLVAINAEKMLTIEDNAEVRELINAAEFKYADGISVVRSVRKKYPQAQVSRVAGADLWEELMARAGKEGTQVFLVGGKPEVLAQTEAKLRNQWNVNIVGSQDGYFKPEQRQALFERIHASGAQIVTVAMGAPKQEIFMRDCRLVHPDALYMGVGGTYDVFTGHVKRAPKIWQTLGLEWLYRLLSQPSRIKRQLRLLRYLRWHYTGNL</sequence>
<gene>
    <name evidence="1" type="primary">wecG</name>
    <name evidence="1" type="synonym">rffM</name>
    <name type="ordered locus">Ecok1_37600</name>
    <name type="ORF">APECO1_2680</name>
</gene>
<proteinExistence type="inferred from homology"/>
<reference key="1">
    <citation type="journal article" date="2007" name="J. Bacteriol.">
        <title>The genome sequence of avian pathogenic Escherichia coli strain O1:K1:H7 shares strong similarities with human extraintestinal pathogenic E. coli genomes.</title>
        <authorList>
            <person name="Johnson T.J."/>
            <person name="Kariyawasam S."/>
            <person name="Wannemuehler Y."/>
            <person name="Mangiamele P."/>
            <person name="Johnson S.J."/>
            <person name="Doetkott C."/>
            <person name="Skyberg J.A."/>
            <person name="Lynne A.M."/>
            <person name="Johnson J.R."/>
            <person name="Nolan L.K."/>
        </authorList>
    </citation>
    <scope>NUCLEOTIDE SEQUENCE [LARGE SCALE GENOMIC DNA]</scope>
</reference>